<feature type="chain" id="PRO_1000084183" description="Phosphoribosyl-AMP cyclohydrolase">
    <location>
        <begin position="1"/>
        <end position="137"/>
    </location>
</feature>
<feature type="binding site" evidence="1">
    <location>
        <position position="84"/>
    </location>
    <ligand>
        <name>Mg(2+)</name>
        <dbReference type="ChEBI" id="CHEBI:18420"/>
    </ligand>
</feature>
<feature type="binding site" evidence="1">
    <location>
        <position position="85"/>
    </location>
    <ligand>
        <name>Zn(2+)</name>
        <dbReference type="ChEBI" id="CHEBI:29105"/>
        <note>ligand shared between dimeric partners</note>
    </ligand>
</feature>
<feature type="binding site" evidence="1">
    <location>
        <position position="86"/>
    </location>
    <ligand>
        <name>Mg(2+)</name>
        <dbReference type="ChEBI" id="CHEBI:18420"/>
    </ligand>
</feature>
<feature type="binding site" evidence="1">
    <location>
        <position position="88"/>
    </location>
    <ligand>
        <name>Mg(2+)</name>
        <dbReference type="ChEBI" id="CHEBI:18420"/>
    </ligand>
</feature>
<feature type="binding site" evidence="1">
    <location>
        <position position="101"/>
    </location>
    <ligand>
        <name>Zn(2+)</name>
        <dbReference type="ChEBI" id="CHEBI:29105"/>
        <note>ligand shared between dimeric partners</note>
    </ligand>
</feature>
<feature type="binding site" evidence="1">
    <location>
        <position position="108"/>
    </location>
    <ligand>
        <name>Zn(2+)</name>
        <dbReference type="ChEBI" id="CHEBI:29105"/>
        <note>ligand shared between dimeric partners</note>
    </ligand>
</feature>
<reference key="1">
    <citation type="submission" date="2007-03" db="EMBL/GenBank/DDBJ databases">
        <title>Complete sequence of Prosthecochloris vibrioformis DSM 265.</title>
        <authorList>
            <consortium name="US DOE Joint Genome Institute"/>
            <person name="Copeland A."/>
            <person name="Lucas S."/>
            <person name="Lapidus A."/>
            <person name="Barry K."/>
            <person name="Detter J.C."/>
            <person name="Glavina del Rio T."/>
            <person name="Hammon N."/>
            <person name="Israni S."/>
            <person name="Pitluck S."/>
            <person name="Schmutz J."/>
            <person name="Larimer F."/>
            <person name="Land M."/>
            <person name="Hauser L."/>
            <person name="Mikhailova N."/>
            <person name="Li T."/>
            <person name="Overmann J."/>
            <person name="Schuster S.C."/>
            <person name="Bryant D.A."/>
            <person name="Richardson P."/>
        </authorList>
    </citation>
    <scope>NUCLEOTIDE SEQUENCE [LARGE SCALE GENOMIC DNA]</scope>
    <source>
        <strain>DSM 265 / 1930</strain>
    </source>
</reference>
<keyword id="KW-0028">Amino-acid biosynthesis</keyword>
<keyword id="KW-0963">Cytoplasm</keyword>
<keyword id="KW-0368">Histidine biosynthesis</keyword>
<keyword id="KW-0378">Hydrolase</keyword>
<keyword id="KW-0460">Magnesium</keyword>
<keyword id="KW-0479">Metal-binding</keyword>
<keyword id="KW-0862">Zinc</keyword>
<gene>
    <name evidence="1" type="primary">hisI</name>
    <name type="ordered locus">Cvib_1481</name>
</gene>
<proteinExistence type="inferred from homology"/>
<organism>
    <name type="scientific">Chlorobium phaeovibrioides (strain DSM 265 / 1930)</name>
    <name type="common">Prosthecochloris vibrioformis (strain DSM 265)</name>
    <dbReference type="NCBI Taxonomy" id="290318"/>
    <lineage>
        <taxon>Bacteria</taxon>
        <taxon>Pseudomonadati</taxon>
        <taxon>Chlorobiota</taxon>
        <taxon>Chlorobiia</taxon>
        <taxon>Chlorobiales</taxon>
        <taxon>Chlorobiaceae</taxon>
        <taxon>Chlorobium/Pelodictyon group</taxon>
        <taxon>Chlorobium</taxon>
    </lineage>
</organism>
<evidence type="ECO:0000255" key="1">
    <source>
        <dbReference type="HAMAP-Rule" id="MF_01021"/>
    </source>
</evidence>
<accession>A4SG83</accession>
<dbReference type="EC" id="3.5.4.19" evidence="1"/>
<dbReference type="EMBL" id="CP000607">
    <property type="protein sequence ID" value="ABP37492.1"/>
    <property type="molecule type" value="Genomic_DNA"/>
</dbReference>
<dbReference type="SMR" id="A4SG83"/>
<dbReference type="STRING" id="290318.Cvib_1481"/>
<dbReference type="KEGG" id="pvi:Cvib_1481"/>
<dbReference type="eggNOG" id="COG0139">
    <property type="taxonomic scope" value="Bacteria"/>
</dbReference>
<dbReference type="HOGENOM" id="CLU_048577_5_2_10"/>
<dbReference type="OrthoDB" id="9795769at2"/>
<dbReference type="UniPathway" id="UPA00031">
    <property type="reaction ID" value="UER00008"/>
</dbReference>
<dbReference type="GO" id="GO:0005737">
    <property type="term" value="C:cytoplasm"/>
    <property type="evidence" value="ECO:0007669"/>
    <property type="project" value="UniProtKB-SubCell"/>
</dbReference>
<dbReference type="GO" id="GO:0000287">
    <property type="term" value="F:magnesium ion binding"/>
    <property type="evidence" value="ECO:0007669"/>
    <property type="project" value="UniProtKB-UniRule"/>
</dbReference>
<dbReference type="GO" id="GO:0004635">
    <property type="term" value="F:phosphoribosyl-AMP cyclohydrolase activity"/>
    <property type="evidence" value="ECO:0007669"/>
    <property type="project" value="UniProtKB-UniRule"/>
</dbReference>
<dbReference type="GO" id="GO:0008270">
    <property type="term" value="F:zinc ion binding"/>
    <property type="evidence" value="ECO:0007669"/>
    <property type="project" value="UniProtKB-UniRule"/>
</dbReference>
<dbReference type="GO" id="GO:0000105">
    <property type="term" value="P:L-histidine biosynthetic process"/>
    <property type="evidence" value="ECO:0007669"/>
    <property type="project" value="UniProtKB-UniRule"/>
</dbReference>
<dbReference type="FunFam" id="3.10.20.810:FF:000001">
    <property type="entry name" value="Histidine biosynthesis bifunctional protein HisIE"/>
    <property type="match status" value="1"/>
</dbReference>
<dbReference type="Gene3D" id="3.10.20.810">
    <property type="entry name" value="Phosphoribosyl-AMP cyclohydrolase"/>
    <property type="match status" value="1"/>
</dbReference>
<dbReference type="HAMAP" id="MF_01021">
    <property type="entry name" value="HisI"/>
    <property type="match status" value="1"/>
</dbReference>
<dbReference type="InterPro" id="IPR026660">
    <property type="entry name" value="PRA-CH"/>
</dbReference>
<dbReference type="InterPro" id="IPR002496">
    <property type="entry name" value="PRib_AMP_CycHydrolase_dom"/>
</dbReference>
<dbReference type="InterPro" id="IPR038019">
    <property type="entry name" value="PRib_AMP_CycHydrolase_sf"/>
</dbReference>
<dbReference type="NCBIfam" id="NF000768">
    <property type="entry name" value="PRK00051.1"/>
    <property type="match status" value="1"/>
</dbReference>
<dbReference type="PANTHER" id="PTHR42945">
    <property type="entry name" value="HISTIDINE BIOSYNTHESIS BIFUNCTIONAL PROTEIN"/>
    <property type="match status" value="1"/>
</dbReference>
<dbReference type="PANTHER" id="PTHR42945:SF1">
    <property type="entry name" value="HISTIDINE BIOSYNTHESIS BIFUNCTIONAL PROTEIN HIS7"/>
    <property type="match status" value="1"/>
</dbReference>
<dbReference type="Pfam" id="PF01502">
    <property type="entry name" value="PRA-CH"/>
    <property type="match status" value="1"/>
</dbReference>
<dbReference type="SUPFAM" id="SSF141734">
    <property type="entry name" value="HisI-like"/>
    <property type="match status" value="1"/>
</dbReference>
<name>HIS3_CHLPM</name>
<comment type="function">
    <text evidence="1">Catalyzes the hydrolysis of the adenine ring of phosphoribosyl-AMP.</text>
</comment>
<comment type="catalytic activity">
    <reaction evidence="1">
        <text>1-(5-phospho-beta-D-ribosyl)-5'-AMP + H2O = 1-(5-phospho-beta-D-ribosyl)-5-[(5-phospho-beta-D-ribosylamino)methylideneamino]imidazole-4-carboxamide</text>
        <dbReference type="Rhea" id="RHEA:20049"/>
        <dbReference type="ChEBI" id="CHEBI:15377"/>
        <dbReference type="ChEBI" id="CHEBI:58435"/>
        <dbReference type="ChEBI" id="CHEBI:59457"/>
        <dbReference type="EC" id="3.5.4.19"/>
    </reaction>
</comment>
<comment type="cofactor">
    <cofactor evidence="1">
        <name>Mg(2+)</name>
        <dbReference type="ChEBI" id="CHEBI:18420"/>
    </cofactor>
    <text evidence="1">Binds 1 Mg(2+) ion per subunit.</text>
</comment>
<comment type="cofactor">
    <cofactor evidence="1">
        <name>Zn(2+)</name>
        <dbReference type="ChEBI" id="CHEBI:29105"/>
    </cofactor>
    <text evidence="1">Binds 1 zinc ion per subunit.</text>
</comment>
<comment type="pathway">
    <text evidence="1">Amino-acid biosynthesis; L-histidine biosynthesis; L-histidine from 5-phospho-alpha-D-ribose 1-diphosphate: step 3/9.</text>
</comment>
<comment type="subunit">
    <text evidence="1">Homodimer.</text>
</comment>
<comment type="subcellular location">
    <subcellularLocation>
        <location evidence="1">Cytoplasm</location>
    </subcellularLocation>
</comment>
<comment type="similarity">
    <text evidence="1">Belongs to the PRA-CH family.</text>
</comment>
<sequence length="137" mass="15705">MGENEGIDKSFLDTVKFDDRGLIPAIVQDHETGKVLMMAWMNRESLEMTLERKKACYWSRSRNKLWLKGESSGNMQEVFDILIDCDGDTLILKVSQIGGACHVGYHSCFYRKVNEDGSMQICDTLMFNPEEVYGKKH</sequence>
<protein>
    <recommendedName>
        <fullName evidence="1">Phosphoribosyl-AMP cyclohydrolase</fullName>
        <shortName evidence="1">PRA-CH</shortName>
        <ecNumber evidence="1">3.5.4.19</ecNumber>
    </recommendedName>
</protein>